<gene>
    <name type="ordered locus">pXO2-65</name>
    <name type="ordered locus">BXB0087</name>
    <name type="ordered locus">GBAA_pXO2_0087</name>
</gene>
<feature type="chain" id="PRO_0000216858" description="Uncharacterized protein pXO2-65/BXB0087/GBAA_pXO2_0087">
    <location>
        <begin position="1"/>
        <end position="111"/>
    </location>
</feature>
<feature type="transmembrane region" description="Helical" evidence="1">
    <location>
        <begin position="7"/>
        <end position="27"/>
    </location>
</feature>
<feature type="transmembrane region" description="Helical" evidence="1">
    <location>
        <begin position="53"/>
        <end position="73"/>
    </location>
</feature>
<reference key="1">
    <citation type="journal article" date="1999" name="J. Appl. Microbiol.">
        <title>Sequence, assembly and analysis of pXO1 and pXO2.</title>
        <authorList>
            <person name="Okinaka R.T."/>
            <person name="Cloud K."/>
            <person name="Hampton O."/>
            <person name="Hoffmaster A."/>
            <person name="Hill K.K."/>
            <person name="Keim P."/>
            <person name="Koehler T."/>
            <person name="Lamke G."/>
            <person name="Kumano S."/>
            <person name="Manter D."/>
            <person name="Martinez Y."/>
            <person name="Ricke D."/>
            <person name="Svensson R."/>
            <person name="Jackson P.J."/>
        </authorList>
    </citation>
    <scope>NUCLEOTIDE SEQUENCE [GENOMIC DNA]</scope>
    <source>
        <strain>Pasteur</strain>
    </source>
</reference>
<reference key="2">
    <citation type="journal article" date="2002" name="Science">
        <title>Comparative genome sequencing for discovery of novel polymorphisms in Bacillus anthracis.</title>
        <authorList>
            <person name="Read T.D."/>
            <person name="Salzberg S.L."/>
            <person name="Pop M."/>
            <person name="Shumway M.F."/>
            <person name="Umayam L."/>
            <person name="Jiang L."/>
            <person name="Holtzapple E."/>
            <person name="Busch J.D."/>
            <person name="Smith K.L."/>
            <person name="Schupp J.M."/>
            <person name="Solomon D."/>
            <person name="Keim P."/>
            <person name="Fraser C.M."/>
        </authorList>
    </citation>
    <scope>NUCLEOTIDE SEQUENCE [GENOMIC DNA]</scope>
    <source>
        <strain>Ames / isolate Florida / A2012</strain>
    </source>
</reference>
<reference key="3">
    <citation type="journal article" date="2009" name="J. Bacteriol.">
        <title>The complete genome sequence of Bacillus anthracis Ames 'Ancestor'.</title>
        <authorList>
            <person name="Ravel J."/>
            <person name="Jiang L."/>
            <person name="Stanley S.T."/>
            <person name="Wilson M.R."/>
            <person name="Decker R.S."/>
            <person name="Read T.D."/>
            <person name="Worsham P."/>
            <person name="Keim P.S."/>
            <person name="Salzberg S.L."/>
            <person name="Fraser-Liggett C.M."/>
            <person name="Rasko D.A."/>
        </authorList>
    </citation>
    <scope>NUCLEOTIDE SEQUENCE [LARGE SCALE GENOMIC DNA]</scope>
    <source>
        <strain>Ames ancestor</strain>
    </source>
</reference>
<comment type="subcellular location">
    <subcellularLocation>
        <location evidence="2">Cell membrane</location>
        <topology evidence="2">Multi-pass membrane protein</topology>
    </subcellularLocation>
</comment>
<sequence length="111" mass="12601">MKIWKNILNIILALAVPIGLLFISMMIGEGVLDLFLDILNINYDDLSYLEEKAFAMFIPLLIIALTLLVTFLHHRSLRPLRLSTGFLSKETYKNYGIGIGIVFIFLSLIQS</sequence>
<name>Y6587_BACAN</name>
<accession>Q9RMW9</accession>
<geneLocation type="plasmid">
    <name>pXO2</name>
</geneLocation>
<organism>
    <name type="scientific">Bacillus anthracis</name>
    <dbReference type="NCBI Taxonomy" id="1392"/>
    <lineage>
        <taxon>Bacteria</taxon>
        <taxon>Bacillati</taxon>
        <taxon>Bacillota</taxon>
        <taxon>Bacilli</taxon>
        <taxon>Bacillales</taxon>
        <taxon>Bacillaceae</taxon>
        <taxon>Bacillus</taxon>
        <taxon>Bacillus cereus group</taxon>
    </lineage>
</organism>
<protein>
    <recommendedName>
        <fullName>Uncharacterized protein pXO2-65/BXB0087/GBAA_pXO2_0087</fullName>
    </recommendedName>
</protein>
<proteinExistence type="predicted"/>
<evidence type="ECO:0000255" key="1"/>
<evidence type="ECO:0000305" key="2"/>
<keyword id="KW-1003">Cell membrane</keyword>
<keyword id="KW-0472">Membrane</keyword>
<keyword id="KW-0614">Plasmid</keyword>
<keyword id="KW-1185">Reference proteome</keyword>
<keyword id="KW-0812">Transmembrane</keyword>
<keyword id="KW-1133">Transmembrane helix</keyword>
<dbReference type="EMBL" id="AF188935">
    <property type="protein sequence ID" value="AAF13670.1"/>
    <property type="molecule type" value="Genomic_DNA"/>
</dbReference>
<dbReference type="EMBL" id="AE011191">
    <property type="protein sequence ID" value="AAM26238.1"/>
    <property type="molecule type" value="Genomic_DNA"/>
</dbReference>
<dbReference type="EMBL" id="AE017335">
    <property type="protein sequence ID" value="AAT29017.2"/>
    <property type="molecule type" value="Genomic_DNA"/>
</dbReference>
<dbReference type="RefSeq" id="NP_053220.1">
    <property type="nucleotide sequence ID" value="NC_002146.1"/>
</dbReference>
<dbReference type="RefSeq" id="WP_000708166.1">
    <property type="nucleotide sequence ID" value="NZ_VTZL01000009.1"/>
</dbReference>
<dbReference type="SMR" id="Q9RMW9"/>
<dbReference type="GeneID" id="45025378"/>
<dbReference type="KEGG" id="banh:HYU01_29395"/>
<dbReference type="KEGG" id="bar:GBAA_pXO2_0087"/>
<dbReference type="HOGENOM" id="CLU_2153133_0_0_9"/>
<dbReference type="Proteomes" id="UP000000594">
    <property type="component" value="Plasmid pXO2"/>
</dbReference>
<dbReference type="GO" id="GO:0005886">
    <property type="term" value="C:plasma membrane"/>
    <property type="evidence" value="ECO:0007669"/>
    <property type="project" value="UniProtKB-SubCell"/>
</dbReference>